<dbReference type="EMBL" id="DQ465576">
    <property type="protein sequence ID" value="ABF56549.1"/>
    <property type="molecule type" value="Genomic_DNA"/>
</dbReference>
<dbReference type="SMR" id="Q1HN32"/>
<dbReference type="GlyCosmos" id="Q1HN32">
    <property type="glycosylation" value="1 site, No reported glycans"/>
</dbReference>
<dbReference type="GO" id="GO:0030424">
    <property type="term" value="C:axon"/>
    <property type="evidence" value="ECO:0007669"/>
    <property type="project" value="TreeGrafter"/>
</dbReference>
<dbReference type="GO" id="GO:0030425">
    <property type="term" value="C:dendrite"/>
    <property type="evidence" value="ECO:0007669"/>
    <property type="project" value="TreeGrafter"/>
</dbReference>
<dbReference type="GO" id="GO:0005615">
    <property type="term" value="C:extracellular space"/>
    <property type="evidence" value="ECO:0007669"/>
    <property type="project" value="TreeGrafter"/>
</dbReference>
<dbReference type="GO" id="GO:0008021">
    <property type="term" value="C:synaptic vesicle"/>
    <property type="evidence" value="ECO:0007669"/>
    <property type="project" value="TreeGrafter"/>
</dbReference>
<dbReference type="GO" id="GO:0008083">
    <property type="term" value="F:growth factor activity"/>
    <property type="evidence" value="ECO:0007669"/>
    <property type="project" value="UniProtKB-KW"/>
</dbReference>
<dbReference type="GO" id="GO:0005163">
    <property type="term" value="F:nerve growth factor receptor binding"/>
    <property type="evidence" value="ECO:0007669"/>
    <property type="project" value="TreeGrafter"/>
</dbReference>
<dbReference type="GO" id="GO:0007169">
    <property type="term" value="P:cell surface receptor protein tyrosine kinase signaling pathway"/>
    <property type="evidence" value="ECO:0007669"/>
    <property type="project" value="TreeGrafter"/>
</dbReference>
<dbReference type="GO" id="GO:0050804">
    <property type="term" value="P:modulation of chemical synaptic transmission"/>
    <property type="evidence" value="ECO:0007669"/>
    <property type="project" value="TreeGrafter"/>
</dbReference>
<dbReference type="GO" id="GO:0043524">
    <property type="term" value="P:negative regulation of neuron apoptotic process"/>
    <property type="evidence" value="ECO:0007669"/>
    <property type="project" value="TreeGrafter"/>
</dbReference>
<dbReference type="GO" id="GO:0021675">
    <property type="term" value="P:nerve development"/>
    <property type="evidence" value="ECO:0007669"/>
    <property type="project" value="TreeGrafter"/>
</dbReference>
<dbReference type="GO" id="GO:0038180">
    <property type="term" value="P:nerve growth factor signaling pathway"/>
    <property type="evidence" value="ECO:0007669"/>
    <property type="project" value="TreeGrafter"/>
</dbReference>
<dbReference type="GO" id="GO:0048812">
    <property type="term" value="P:neuron projection morphogenesis"/>
    <property type="evidence" value="ECO:0007669"/>
    <property type="project" value="TreeGrafter"/>
</dbReference>
<dbReference type="FunFam" id="2.10.90.10:FF:000002">
    <property type="entry name" value="Brain-derived neurotrophic factor"/>
    <property type="match status" value="1"/>
</dbReference>
<dbReference type="Gene3D" id="2.10.90.10">
    <property type="entry name" value="Cystine-knot cytokines"/>
    <property type="match status" value="1"/>
</dbReference>
<dbReference type="InterPro" id="IPR020430">
    <property type="entry name" value="Brain-der_neurotrophic_factor"/>
</dbReference>
<dbReference type="InterPro" id="IPR029034">
    <property type="entry name" value="Cystine-knot_cytokine"/>
</dbReference>
<dbReference type="InterPro" id="IPR020408">
    <property type="entry name" value="Nerve_growth_factor-like"/>
</dbReference>
<dbReference type="InterPro" id="IPR002072">
    <property type="entry name" value="Nerve_growth_factor-rel"/>
</dbReference>
<dbReference type="InterPro" id="IPR019846">
    <property type="entry name" value="Nerve_growth_factor_CS"/>
</dbReference>
<dbReference type="PANTHER" id="PTHR11589:SF3">
    <property type="entry name" value="BRAIN-DERIVED NEUROTROPHIC FACTOR"/>
    <property type="match status" value="1"/>
</dbReference>
<dbReference type="PANTHER" id="PTHR11589">
    <property type="entry name" value="NERVE GROWTH FACTOR NGF -RELATED"/>
    <property type="match status" value="1"/>
</dbReference>
<dbReference type="Pfam" id="PF00243">
    <property type="entry name" value="NGF"/>
    <property type="match status" value="1"/>
</dbReference>
<dbReference type="PIRSF" id="PIRSF001789">
    <property type="entry name" value="NGF"/>
    <property type="match status" value="1"/>
</dbReference>
<dbReference type="PRINTS" id="PR01912">
    <property type="entry name" value="BDNFACTOR"/>
</dbReference>
<dbReference type="PRINTS" id="PR00268">
    <property type="entry name" value="NGF"/>
</dbReference>
<dbReference type="SMART" id="SM00140">
    <property type="entry name" value="NGF"/>
    <property type="match status" value="1"/>
</dbReference>
<dbReference type="SUPFAM" id="SSF57501">
    <property type="entry name" value="Cystine-knot cytokines"/>
    <property type="match status" value="1"/>
</dbReference>
<dbReference type="PROSITE" id="PS00248">
    <property type="entry name" value="NGF_1"/>
    <property type="match status" value="1"/>
</dbReference>
<dbReference type="PROSITE" id="PS50270">
    <property type="entry name" value="NGF_2"/>
    <property type="match status" value="1"/>
</dbReference>
<proteinExistence type="inferred from homology"/>
<keyword id="KW-0165">Cleavage on pair of basic residues</keyword>
<keyword id="KW-1015">Disulfide bond</keyword>
<keyword id="KW-0325">Glycoprotein</keyword>
<keyword id="KW-0339">Growth factor</keyword>
<keyword id="KW-0964">Secreted</keyword>
<keyword id="KW-0732">Signal</keyword>
<accession>Q1HN32</accession>
<sequence length="223" mass="25045">SCMKAAPMKEVSIRGQGSLAYPGLRTQGNLETLSGPNDATRGLTSLADTFEHVIEELLDEQQAIQPSKENKDADLYSTRVMLSSQVPLEPPLLFLLEEYKNYLDAANMSMRVRRHSDPARRGELSVCDSTSEWVTAAEKKTAVDMSGATVTVLEKVPVPKGQLKQYFYETKCSSKGYAKEGCRGIDKRYWNSQCRTTQSFVRALTMDNKKRVGWRFIRIDTSC</sequence>
<evidence type="ECO:0000250" key="1"/>
<evidence type="ECO:0000255" key="2"/>
<evidence type="ECO:0000305" key="3"/>
<organism>
    <name type="scientific">Eryx johnii</name>
    <name type="common">Indian red sand boa</name>
    <name type="synonym">Boa johnii</name>
    <dbReference type="NCBI Taxonomy" id="51870"/>
    <lineage>
        <taxon>Eukaryota</taxon>
        <taxon>Metazoa</taxon>
        <taxon>Chordata</taxon>
        <taxon>Craniata</taxon>
        <taxon>Vertebrata</taxon>
        <taxon>Euteleostomi</taxon>
        <taxon>Lepidosauria</taxon>
        <taxon>Squamata</taxon>
        <taxon>Bifurcata</taxon>
        <taxon>Unidentata</taxon>
        <taxon>Episquamata</taxon>
        <taxon>Toxicofera</taxon>
        <taxon>Serpentes</taxon>
        <taxon>Henophidia</taxon>
        <taxon>Boidae</taxon>
        <taxon>Erycinae</taxon>
        <taxon>Eryx</taxon>
    </lineage>
</organism>
<reference key="1">
    <citation type="journal article" date="2006" name="Mol. Phylogenet. Evol.">
        <title>Dispersal and vicariance: the complex evolutionary history of boid snakes.</title>
        <authorList>
            <person name="Noonan B.P."/>
            <person name="Chippindale P.T."/>
        </authorList>
    </citation>
    <scope>NUCLEOTIDE SEQUENCE [GENOMIC DNA]</scope>
</reference>
<gene>
    <name type="primary">BDNF</name>
</gene>
<name>BDNF_ERYJO</name>
<protein>
    <recommendedName>
        <fullName evidence="3">Neurotrophic factor BDNF precursor form</fullName>
        <shortName>proBDNF</shortName>
    </recommendedName>
    <alternativeName>
        <fullName>Brain-derived neurotrophic factor</fullName>
    </alternativeName>
    <component>
        <recommendedName>
            <fullName>Neurotrophic factor BDNF</fullName>
        </recommendedName>
    </component>
</protein>
<comment type="function">
    <text evidence="1">Promotes the survival of neuronal populations that are all located either in the central nervous system or directly connected to it.</text>
</comment>
<comment type="subcellular location">
    <subcellularLocation>
        <location evidence="1">Secreted</location>
    </subcellularLocation>
</comment>
<comment type="similarity">
    <text evidence="3">Belongs to the NGF-beta family.</text>
</comment>
<feature type="signal peptide" evidence="2">
    <location>
        <begin position="1" status="less than"/>
        <end position="5"/>
    </location>
</feature>
<feature type="propeptide" id="PRO_0000346685" evidence="1">
    <location>
        <begin position="6"/>
        <end position="114"/>
    </location>
</feature>
<feature type="chain" id="PRO_0000346686" description="Neurotrophic factor BDNF">
    <location>
        <begin position="115"/>
        <end position="223" status="greater than"/>
    </location>
</feature>
<feature type="glycosylation site" description="N-linked (GlcNAc...) asparagine" evidence="2">
    <location>
        <position position="107"/>
    </location>
</feature>
<feature type="disulfide bond" evidence="1">
    <location>
        <begin position="127"/>
        <end position="194"/>
    </location>
</feature>
<feature type="disulfide bond" evidence="1">
    <location>
        <begin position="172"/>
        <end position="223"/>
    </location>
</feature>
<feature type="non-terminal residue">
    <location>
        <position position="1"/>
    </location>
</feature>
<feature type="non-terminal residue">
    <location>
        <position position="223"/>
    </location>
</feature>